<proteinExistence type="inferred from homology"/>
<dbReference type="EC" id="6.5.1.2" evidence="1"/>
<dbReference type="EMBL" id="CP000548">
    <property type="protein sequence ID" value="ABO06770.1"/>
    <property type="molecule type" value="Genomic_DNA"/>
</dbReference>
<dbReference type="RefSeq" id="WP_004192539.1">
    <property type="nucleotide sequence ID" value="NZ_CP007802.1"/>
</dbReference>
<dbReference type="SMR" id="A3MKU9"/>
<dbReference type="GeneID" id="92979286"/>
<dbReference type="KEGG" id="bmaz:BM44_1793"/>
<dbReference type="KEGG" id="bmn:BMA10247_1334"/>
<dbReference type="PATRIC" id="fig|320389.8.peg.2006"/>
<dbReference type="GO" id="GO:0005829">
    <property type="term" value="C:cytosol"/>
    <property type="evidence" value="ECO:0007669"/>
    <property type="project" value="TreeGrafter"/>
</dbReference>
<dbReference type="GO" id="GO:0003677">
    <property type="term" value="F:DNA binding"/>
    <property type="evidence" value="ECO:0007669"/>
    <property type="project" value="InterPro"/>
</dbReference>
<dbReference type="GO" id="GO:0003911">
    <property type="term" value="F:DNA ligase (NAD+) activity"/>
    <property type="evidence" value="ECO:0007669"/>
    <property type="project" value="UniProtKB-UniRule"/>
</dbReference>
<dbReference type="GO" id="GO:0046872">
    <property type="term" value="F:metal ion binding"/>
    <property type="evidence" value="ECO:0007669"/>
    <property type="project" value="UniProtKB-KW"/>
</dbReference>
<dbReference type="GO" id="GO:0006281">
    <property type="term" value="P:DNA repair"/>
    <property type="evidence" value="ECO:0007669"/>
    <property type="project" value="UniProtKB-KW"/>
</dbReference>
<dbReference type="GO" id="GO:0006260">
    <property type="term" value="P:DNA replication"/>
    <property type="evidence" value="ECO:0007669"/>
    <property type="project" value="UniProtKB-KW"/>
</dbReference>
<dbReference type="CDD" id="cd17748">
    <property type="entry name" value="BRCT_DNA_ligase_like"/>
    <property type="match status" value="1"/>
</dbReference>
<dbReference type="CDD" id="cd00114">
    <property type="entry name" value="LIGANc"/>
    <property type="match status" value="1"/>
</dbReference>
<dbReference type="FunFam" id="1.10.150.20:FF:000006">
    <property type="entry name" value="DNA ligase"/>
    <property type="match status" value="1"/>
</dbReference>
<dbReference type="FunFam" id="1.10.150.20:FF:000007">
    <property type="entry name" value="DNA ligase"/>
    <property type="match status" value="1"/>
</dbReference>
<dbReference type="FunFam" id="1.10.287.610:FF:000002">
    <property type="entry name" value="DNA ligase"/>
    <property type="match status" value="1"/>
</dbReference>
<dbReference type="FunFam" id="2.40.50.140:FF:000012">
    <property type="entry name" value="DNA ligase"/>
    <property type="match status" value="1"/>
</dbReference>
<dbReference type="FunFam" id="3.30.470.30:FF:000001">
    <property type="entry name" value="DNA ligase"/>
    <property type="match status" value="1"/>
</dbReference>
<dbReference type="FunFam" id="3.40.50.10190:FF:000054">
    <property type="entry name" value="DNA ligase"/>
    <property type="match status" value="1"/>
</dbReference>
<dbReference type="Gene3D" id="6.20.10.30">
    <property type="match status" value="1"/>
</dbReference>
<dbReference type="Gene3D" id="1.10.150.20">
    <property type="entry name" value="5' to 3' exonuclease, C-terminal subdomain"/>
    <property type="match status" value="2"/>
</dbReference>
<dbReference type="Gene3D" id="3.40.50.10190">
    <property type="entry name" value="BRCT domain"/>
    <property type="match status" value="1"/>
</dbReference>
<dbReference type="Gene3D" id="3.30.470.30">
    <property type="entry name" value="DNA ligase/mRNA capping enzyme"/>
    <property type="match status" value="1"/>
</dbReference>
<dbReference type="Gene3D" id="1.10.287.610">
    <property type="entry name" value="Helix hairpin bin"/>
    <property type="match status" value="1"/>
</dbReference>
<dbReference type="Gene3D" id="2.40.50.140">
    <property type="entry name" value="Nucleic acid-binding proteins"/>
    <property type="match status" value="1"/>
</dbReference>
<dbReference type="HAMAP" id="MF_01588">
    <property type="entry name" value="DNA_ligase_A"/>
    <property type="match status" value="1"/>
</dbReference>
<dbReference type="InterPro" id="IPR001357">
    <property type="entry name" value="BRCT_dom"/>
</dbReference>
<dbReference type="InterPro" id="IPR036420">
    <property type="entry name" value="BRCT_dom_sf"/>
</dbReference>
<dbReference type="InterPro" id="IPR041663">
    <property type="entry name" value="DisA/LigA_HHH"/>
</dbReference>
<dbReference type="InterPro" id="IPR001679">
    <property type="entry name" value="DNA_ligase"/>
</dbReference>
<dbReference type="InterPro" id="IPR018239">
    <property type="entry name" value="DNA_ligase_AS"/>
</dbReference>
<dbReference type="InterPro" id="IPR033136">
    <property type="entry name" value="DNA_ligase_CS"/>
</dbReference>
<dbReference type="InterPro" id="IPR013839">
    <property type="entry name" value="DNAligase_adenylation"/>
</dbReference>
<dbReference type="InterPro" id="IPR013840">
    <property type="entry name" value="DNAligase_N"/>
</dbReference>
<dbReference type="InterPro" id="IPR003583">
    <property type="entry name" value="Hlx-hairpin-Hlx_DNA-bd_motif"/>
</dbReference>
<dbReference type="InterPro" id="IPR012340">
    <property type="entry name" value="NA-bd_OB-fold"/>
</dbReference>
<dbReference type="InterPro" id="IPR004150">
    <property type="entry name" value="NAD_DNA_ligase_OB"/>
</dbReference>
<dbReference type="InterPro" id="IPR010994">
    <property type="entry name" value="RuvA_2-like"/>
</dbReference>
<dbReference type="InterPro" id="IPR004149">
    <property type="entry name" value="Znf_DNAligase_C4"/>
</dbReference>
<dbReference type="NCBIfam" id="TIGR00575">
    <property type="entry name" value="dnlj"/>
    <property type="match status" value="1"/>
</dbReference>
<dbReference type="NCBIfam" id="NF005932">
    <property type="entry name" value="PRK07956.1"/>
    <property type="match status" value="1"/>
</dbReference>
<dbReference type="PANTHER" id="PTHR23389">
    <property type="entry name" value="CHROMOSOME TRANSMISSION FIDELITY FACTOR 18"/>
    <property type="match status" value="1"/>
</dbReference>
<dbReference type="PANTHER" id="PTHR23389:SF9">
    <property type="entry name" value="DNA LIGASE"/>
    <property type="match status" value="1"/>
</dbReference>
<dbReference type="Pfam" id="PF00533">
    <property type="entry name" value="BRCT"/>
    <property type="match status" value="1"/>
</dbReference>
<dbReference type="Pfam" id="PF01653">
    <property type="entry name" value="DNA_ligase_aden"/>
    <property type="match status" value="1"/>
</dbReference>
<dbReference type="Pfam" id="PF03120">
    <property type="entry name" value="DNA_ligase_OB"/>
    <property type="match status" value="1"/>
</dbReference>
<dbReference type="Pfam" id="PF03119">
    <property type="entry name" value="DNA_ligase_ZBD"/>
    <property type="match status" value="1"/>
</dbReference>
<dbReference type="Pfam" id="PF12826">
    <property type="entry name" value="HHH_2"/>
    <property type="match status" value="1"/>
</dbReference>
<dbReference type="Pfam" id="PF14520">
    <property type="entry name" value="HHH_5"/>
    <property type="match status" value="1"/>
</dbReference>
<dbReference type="Pfam" id="PF22745">
    <property type="entry name" value="Nlig-Ia"/>
    <property type="match status" value="1"/>
</dbReference>
<dbReference type="PIRSF" id="PIRSF001604">
    <property type="entry name" value="LigA"/>
    <property type="match status" value="1"/>
</dbReference>
<dbReference type="SMART" id="SM00292">
    <property type="entry name" value="BRCT"/>
    <property type="match status" value="1"/>
</dbReference>
<dbReference type="SMART" id="SM00278">
    <property type="entry name" value="HhH1"/>
    <property type="match status" value="4"/>
</dbReference>
<dbReference type="SMART" id="SM00532">
    <property type="entry name" value="LIGANc"/>
    <property type="match status" value="1"/>
</dbReference>
<dbReference type="SUPFAM" id="SSF52113">
    <property type="entry name" value="BRCT domain"/>
    <property type="match status" value="1"/>
</dbReference>
<dbReference type="SUPFAM" id="SSF56091">
    <property type="entry name" value="DNA ligase/mRNA capping enzyme, catalytic domain"/>
    <property type="match status" value="1"/>
</dbReference>
<dbReference type="SUPFAM" id="SSF50249">
    <property type="entry name" value="Nucleic acid-binding proteins"/>
    <property type="match status" value="1"/>
</dbReference>
<dbReference type="SUPFAM" id="SSF47781">
    <property type="entry name" value="RuvA domain 2-like"/>
    <property type="match status" value="1"/>
</dbReference>
<dbReference type="PROSITE" id="PS50172">
    <property type="entry name" value="BRCT"/>
    <property type="match status" value="1"/>
</dbReference>
<dbReference type="PROSITE" id="PS01055">
    <property type="entry name" value="DNA_LIGASE_N1"/>
    <property type="match status" value="1"/>
</dbReference>
<dbReference type="PROSITE" id="PS01056">
    <property type="entry name" value="DNA_LIGASE_N2"/>
    <property type="match status" value="1"/>
</dbReference>
<feature type="chain" id="PRO_0000313163" description="DNA ligase">
    <location>
        <begin position="1"/>
        <end position="691"/>
    </location>
</feature>
<feature type="domain" description="BRCT" evidence="1">
    <location>
        <begin position="610"/>
        <end position="691"/>
    </location>
</feature>
<feature type="active site" description="N6-AMP-lysine intermediate" evidence="1">
    <location>
        <position position="132"/>
    </location>
</feature>
<feature type="binding site" evidence="1">
    <location>
        <begin position="41"/>
        <end position="45"/>
    </location>
    <ligand>
        <name>NAD(+)</name>
        <dbReference type="ChEBI" id="CHEBI:57540"/>
    </ligand>
</feature>
<feature type="binding site" evidence="1">
    <location>
        <begin position="90"/>
        <end position="91"/>
    </location>
    <ligand>
        <name>NAD(+)</name>
        <dbReference type="ChEBI" id="CHEBI:57540"/>
    </ligand>
</feature>
<feature type="binding site" evidence="1">
    <location>
        <position position="130"/>
    </location>
    <ligand>
        <name>NAD(+)</name>
        <dbReference type="ChEBI" id="CHEBI:57540"/>
    </ligand>
</feature>
<feature type="binding site" evidence="1">
    <location>
        <position position="153"/>
    </location>
    <ligand>
        <name>NAD(+)</name>
        <dbReference type="ChEBI" id="CHEBI:57540"/>
    </ligand>
</feature>
<feature type="binding site" evidence="1">
    <location>
        <position position="190"/>
    </location>
    <ligand>
        <name>NAD(+)</name>
        <dbReference type="ChEBI" id="CHEBI:57540"/>
    </ligand>
</feature>
<feature type="binding site" evidence="1">
    <location>
        <position position="307"/>
    </location>
    <ligand>
        <name>NAD(+)</name>
        <dbReference type="ChEBI" id="CHEBI:57540"/>
    </ligand>
</feature>
<feature type="binding site" evidence="1">
    <location>
        <position position="331"/>
    </location>
    <ligand>
        <name>NAD(+)</name>
        <dbReference type="ChEBI" id="CHEBI:57540"/>
    </ligand>
</feature>
<feature type="binding site" evidence="1">
    <location>
        <position position="425"/>
    </location>
    <ligand>
        <name>Zn(2+)</name>
        <dbReference type="ChEBI" id="CHEBI:29105"/>
    </ligand>
</feature>
<feature type="binding site" evidence="1">
    <location>
        <position position="428"/>
    </location>
    <ligand>
        <name>Zn(2+)</name>
        <dbReference type="ChEBI" id="CHEBI:29105"/>
    </ligand>
</feature>
<feature type="binding site" evidence="1">
    <location>
        <position position="443"/>
    </location>
    <ligand>
        <name>Zn(2+)</name>
        <dbReference type="ChEBI" id="CHEBI:29105"/>
    </ligand>
</feature>
<feature type="binding site" evidence="1">
    <location>
        <position position="449"/>
    </location>
    <ligand>
        <name>Zn(2+)</name>
        <dbReference type="ChEBI" id="CHEBI:29105"/>
    </ligand>
</feature>
<sequence length="691" mass="75584">MARSPVEPPASQPAKRAAWLRAELERANYAYYVLDQPDLPDAEYDRLFVELQRIEAEHPDLVTPDSPTQRVGGEAASGFTPVVHDKPMLSLNNGFADEDVIAFDKRVADGLDKATDLAGTVTEPVEYACELKFDGLAISLRYENGRFVQASTRGDGTTGEDVTENIRTIRAIPLTLKGKRIPRMLDVRGEVLMFKRDFARLNERQRAAGQREFANPRNAAAGSLRQLDSKITASRPLSFFAYGIGVLDGADMPDTHSGLLDWYETLGLPVNRERAVVRGAAGLLAFFHSVGERRESLPYDIDGVVYKVNRRDEQDRLGFVSRAPRFALAHKFPAQEALTKLTAIDVQVGRTGAITPVARLEPVFVGGATVTNATLHNEDEVRRKDIRIGDTVIVRRAGDVIPEVVSAVLDRRPADAQEFVMPTECPECGSRIERLPDEAIARCTGGLFCPAQRKQALWHFAQRRALDIDGLGEKIIDQLVEQNLVRTPADLFNLGFSTLVALDRFAEKSARNLIDSLEKAKHTTLARFIYALGIRHVGESTAKDLAKHFGSLDPIMDAPIDALLEVNDVGPIVAESIHQFFAEEHNRTVIEQLRARGKVTWPEGPPAPRAPQGVLAGKTVVLTGTLPTLTREAAKEMLEAAGAKVAGSVSKKTDYVVAGADAGSKLAKAEELGIPVLDEAGMHTLLEGHAR</sequence>
<accession>A3MKU9</accession>
<comment type="function">
    <text evidence="1">DNA ligase that catalyzes the formation of phosphodiester linkages between 5'-phosphoryl and 3'-hydroxyl groups in double-stranded DNA using NAD as a coenzyme and as the energy source for the reaction. It is essential for DNA replication and repair of damaged DNA.</text>
</comment>
<comment type="catalytic activity">
    <reaction evidence="1">
        <text>NAD(+) + (deoxyribonucleotide)n-3'-hydroxyl + 5'-phospho-(deoxyribonucleotide)m = (deoxyribonucleotide)n+m + AMP + beta-nicotinamide D-nucleotide.</text>
        <dbReference type="EC" id="6.5.1.2"/>
    </reaction>
</comment>
<comment type="cofactor">
    <cofactor evidence="1">
        <name>Mg(2+)</name>
        <dbReference type="ChEBI" id="CHEBI:18420"/>
    </cofactor>
    <cofactor evidence="1">
        <name>Mn(2+)</name>
        <dbReference type="ChEBI" id="CHEBI:29035"/>
    </cofactor>
</comment>
<comment type="similarity">
    <text evidence="1">Belongs to the NAD-dependent DNA ligase family. LigA subfamily.</text>
</comment>
<keyword id="KW-0227">DNA damage</keyword>
<keyword id="KW-0234">DNA repair</keyword>
<keyword id="KW-0235">DNA replication</keyword>
<keyword id="KW-0436">Ligase</keyword>
<keyword id="KW-0460">Magnesium</keyword>
<keyword id="KW-0464">Manganese</keyword>
<keyword id="KW-0479">Metal-binding</keyword>
<keyword id="KW-0520">NAD</keyword>
<keyword id="KW-0862">Zinc</keyword>
<reference key="1">
    <citation type="journal article" date="2010" name="Genome Biol. Evol.">
        <title>Continuing evolution of Burkholderia mallei through genome reduction and large-scale rearrangements.</title>
        <authorList>
            <person name="Losada L."/>
            <person name="Ronning C.M."/>
            <person name="DeShazer D."/>
            <person name="Woods D."/>
            <person name="Fedorova N."/>
            <person name="Kim H.S."/>
            <person name="Shabalina S.A."/>
            <person name="Pearson T.R."/>
            <person name="Brinkac L."/>
            <person name="Tan P."/>
            <person name="Nandi T."/>
            <person name="Crabtree J."/>
            <person name="Badger J."/>
            <person name="Beckstrom-Sternberg S."/>
            <person name="Saqib M."/>
            <person name="Schutzer S.E."/>
            <person name="Keim P."/>
            <person name="Nierman W.C."/>
        </authorList>
    </citation>
    <scope>NUCLEOTIDE SEQUENCE [LARGE SCALE GENOMIC DNA]</scope>
    <source>
        <strain>NCTC 10247</strain>
    </source>
</reference>
<gene>
    <name evidence="1" type="primary">ligA</name>
    <name type="ordered locus">BMA10247_1334</name>
</gene>
<evidence type="ECO:0000255" key="1">
    <source>
        <dbReference type="HAMAP-Rule" id="MF_01588"/>
    </source>
</evidence>
<organism>
    <name type="scientific">Burkholderia mallei (strain NCTC 10247)</name>
    <dbReference type="NCBI Taxonomy" id="320389"/>
    <lineage>
        <taxon>Bacteria</taxon>
        <taxon>Pseudomonadati</taxon>
        <taxon>Pseudomonadota</taxon>
        <taxon>Betaproteobacteria</taxon>
        <taxon>Burkholderiales</taxon>
        <taxon>Burkholderiaceae</taxon>
        <taxon>Burkholderia</taxon>
        <taxon>pseudomallei group</taxon>
    </lineage>
</organism>
<protein>
    <recommendedName>
        <fullName evidence="1">DNA ligase</fullName>
        <ecNumber evidence="1">6.5.1.2</ecNumber>
    </recommendedName>
    <alternativeName>
        <fullName evidence="1">Polydeoxyribonucleotide synthase [NAD(+)]</fullName>
    </alternativeName>
</protein>
<name>DNLJ_BURM7</name>